<proteinExistence type="predicted"/>
<geneLocation type="mitochondrion"/>
<dbReference type="EMBL" id="M68929">
    <property type="protein sequence ID" value="AAC09435.1"/>
    <property type="molecule type" value="Genomic_DNA"/>
</dbReference>
<dbReference type="PIR" id="S25990">
    <property type="entry name" value="S25990"/>
</dbReference>
<dbReference type="SMR" id="P38471"/>
<dbReference type="GO" id="GO:0005739">
    <property type="term" value="C:mitochondrion"/>
    <property type="evidence" value="ECO:0007669"/>
    <property type="project" value="UniProtKB-SubCell"/>
</dbReference>
<dbReference type="Gene3D" id="1.10.287.690">
    <property type="entry name" value="Helix hairpin bin"/>
    <property type="match status" value="1"/>
</dbReference>
<dbReference type="InterPro" id="IPR043502">
    <property type="entry name" value="DNA/RNA_pol_sf"/>
</dbReference>
<dbReference type="SUPFAM" id="SSF56672">
    <property type="entry name" value="DNA/RNA polymerases"/>
    <property type="match status" value="1"/>
</dbReference>
<protein>
    <recommendedName>
        <fullName>Uncharacterized mitochondrial protein ymf29</fullName>
    </recommendedName>
    <alternativeName>
        <fullName>ORF207</fullName>
    </alternativeName>
</protein>
<keyword id="KW-0496">Mitochondrion</keyword>
<sequence length="207" mass="23499">MNLKLLCAVSWNKDNKCADTDEWLKAIVEDGGYFYRNNRTHQNIDSRSRKWVGLPLENFIGKLVDERNELKGLLKDVNALERSHAKALQNILKLFINTTYGVLGSPYFVVSNTVLANNRTAKAPMGAWMINKALHTRQSITDGGGGLTTIPYLKSEANNPGLGILSDISKWYNSKRGHYQTSLSNIDWKKQYLKSMICQVKRQKYNS</sequence>
<accession>P38471</accession>
<name>YMF29_MARPO</name>
<gene>
    <name type="primary">YMF29</name>
</gene>
<feature type="chain" id="PRO_0000196856" description="Uncharacterized mitochondrial protein ymf29">
    <location>
        <begin position="1"/>
        <end position="207"/>
    </location>
</feature>
<reference key="1">
    <citation type="journal article" date="1992" name="J. Mol. Biol.">
        <title>Gene organization deduced from the complete sequence of liverwort Marchantia polymorpha mitochondrial DNA. A primitive form of plant mitochondrial genome.</title>
        <authorList>
            <person name="Oda K."/>
            <person name="Yamato K."/>
            <person name="Ohta E."/>
            <person name="Nakamura Y."/>
            <person name="Takemura M."/>
            <person name="Nozato N."/>
            <person name="Akashi K."/>
            <person name="Kanegae T."/>
            <person name="Ogura Y."/>
            <person name="Kohchi T."/>
            <person name="Ohyama K."/>
        </authorList>
    </citation>
    <scope>NUCLEOTIDE SEQUENCE [GENOMIC DNA]</scope>
</reference>
<evidence type="ECO:0000305" key="1"/>
<organism>
    <name type="scientific">Marchantia polymorpha</name>
    <name type="common">Common liverwort</name>
    <name type="synonym">Marchantia aquatica</name>
    <dbReference type="NCBI Taxonomy" id="3197"/>
    <lineage>
        <taxon>Eukaryota</taxon>
        <taxon>Viridiplantae</taxon>
        <taxon>Streptophyta</taxon>
        <taxon>Embryophyta</taxon>
        <taxon>Marchantiophyta</taxon>
        <taxon>Marchantiopsida</taxon>
        <taxon>Marchantiidae</taxon>
        <taxon>Marchantiales</taxon>
        <taxon>Marchantiaceae</taxon>
        <taxon>Marchantia</taxon>
    </lineage>
</organism>
<comment type="subcellular location">
    <subcellularLocation>
        <location evidence="1">Mitochondrion</location>
    </subcellularLocation>
</comment>